<keyword id="KW-0963">Cytoplasm</keyword>
<keyword id="KW-0342">GTP-binding</keyword>
<keyword id="KW-0460">Magnesium</keyword>
<keyword id="KW-0479">Metal-binding</keyword>
<keyword id="KW-0501">Molybdenum cofactor biosynthesis</keyword>
<keyword id="KW-0547">Nucleotide-binding</keyword>
<keyword id="KW-1185">Reference proteome</keyword>
<keyword id="KW-0808">Transferase</keyword>
<reference key="1">
    <citation type="journal article" date="2000" name="Nature">
        <title>The genome sequence of the food-borne pathogen Campylobacter jejuni reveals hypervariable sequences.</title>
        <authorList>
            <person name="Parkhill J."/>
            <person name="Wren B.W."/>
            <person name="Mungall K.L."/>
            <person name="Ketley J.M."/>
            <person name="Churcher C.M."/>
            <person name="Basham D."/>
            <person name="Chillingworth T."/>
            <person name="Davies R.M."/>
            <person name="Feltwell T."/>
            <person name="Holroyd S."/>
            <person name="Jagels K."/>
            <person name="Karlyshev A.V."/>
            <person name="Moule S."/>
            <person name="Pallen M.J."/>
            <person name="Penn C.W."/>
            <person name="Quail M.A."/>
            <person name="Rajandream M.A."/>
            <person name="Rutherford K.M."/>
            <person name="van Vliet A.H.M."/>
            <person name="Whitehead S."/>
            <person name="Barrell B.G."/>
        </authorList>
    </citation>
    <scope>NUCLEOTIDE SEQUENCE [LARGE SCALE GENOMIC DNA]</scope>
    <source>
        <strain>ATCC 700819 / NCTC 11168</strain>
    </source>
</reference>
<sequence>MQLNELNCVILCGGKSSRMGQDKSKLILKNQNLTQFQVDKFSKIFKNVYVSAKEDKFENHFSLIKDSLEFEVYSPMLALYSILSNFKNEFVFVLSVDSPKVGENELLKMLPFLEQNYKIIIAKTPLHKHPLCGFYHSSLAQTCKNFLEKNEQKIGLLFSEIKTKFVEFEDEDAFLNLNFYEEYEKFKSKLK</sequence>
<gene>
    <name evidence="1" type="primary">mobA</name>
    <name type="ordered locus">Cj1350</name>
</gene>
<accession>Q9PMU9</accession>
<accession>Q0P8Q9</accession>
<comment type="function">
    <text evidence="1">Transfers a GMP moiety from GTP to Mo-molybdopterin (Mo-MPT) cofactor (Moco or molybdenum cofactor) to form Mo-molybdopterin guanine dinucleotide (Mo-MGD) cofactor.</text>
</comment>
<comment type="catalytic activity">
    <reaction evidence="1">
        <text>Mo-molybdopterin + GTP + H(+) = Mo-molybdopterin guanine dinucleotide + diphosphate</text>
        <dbReference type="Rhea" id="RHEA:34243"/>
        <dbReference type="ChEBI" id="CHEBI:15378"/>
        <dbReference type="ChEBI" id="CHEBI:33019"/>
        <dbReference type="ChEBI" id="CHEBI:37565"/>
        <dbReference type="ChEBI" id="CHEBI:71302"/>
        <dbReference type="ChEBI" id="CHEBI:71310"/>
        <dbReference type="EC" id="2.7.7.77"/>
    </reaction>
</comment>
<comment type="cofactor">
    <cofactor evidence="1">
        <name>Mg(2+)</name>
        <dbReference type="ChEBI" id="CHEBI:18420"/>
    </cofactor>
</comment>
<comment type="subunit">
    <text evidence="1">Monomer.</text>
</comment>
<comment type="subcellular location">
    <subcellularLocation>
        <location evidence="1">Cytoplasm</location>
    </subcellularLocation>
</comment>
<comment type="domain">
    <text evidence="1">The N-terminal domain determines nucleotide recognition and specific binding, while the C-terminal domain determines the specific binding to the target protein.</text>
</comment>
<comment type="similarity">
    <text evidence="1">Belongs to the MobA family.</text>
</comment>
<feature type="chain" id="PRO_0000134884" description="Molybdenum cofactor guanylyltransferase">
    <location>
        <begin position="1"/>
        <end position="191"/>
    </location>
</feature>
<feature type="binding site" evidence="1">
    <location>
        <begin position="11"/>
        <end position="13"/>
    </location>
    <ligand>
        <name>GTP</name>
        <dbReference type="ChEBI" id="CHEBI:37565"/>
    </ligand>
</feature>
<feature type="binding site" evidence="1">
    <location>
        <position position="23"/>
    </location>
    <ligand>
        <name>GTP</name>
        <dbReference type="ChEBI" id="CHEBI:37565"/>
    </ligand>
</feature>
<feature type="binding site" evidence="1">
    <location>
        <position position="66"/>
    </location>
    <ligand>
        <name>GTP</name>
        <dbReference type="ChEBI" id="CHEBI:37565"/>
    </ligand>
</feature>
<feature type="binding site" evidence="1">
    <location>
        <position position="97"/>
    </location>
    <ligand>
        <name>GTP</name>
        <dbReference type="ChEBI" id="CHEBI:37565"/>
    </ligand>
</feature>
<feature type="binding site" evidence="1">
    <location>
        <position position="97"/>
    </location>
    <ligand>
        <name>Mg(2+)</name>
        <dbReference type="ChEBI" id="CHEBI:18420"/>
    </ligand>
</feature>
<organism>
    <name type="scientific">Campylobacter jejuni subsp. jejuni serotype O:2 (strain ATCC 700819 / NCTC 11168)</name>
    <dbReference type="NCBI Taxonomy" id="192222"/>
    <lineage>
        <taxon>Bacteria</taxon>
        <taxon>Pseudomonadati</taxon>
        <taxon>Campylobacterota</taxon>
        <taxon>Epsilonproteobacteria</taxon>
        <taxon>Campylobacterales</taxon>
        <taxon>Campylobacteraceae</taxon>
        <taxon>Campylobacter</taxon>
    </lineage>
</organism>
<name>MOBA_CAMJE</name>
<protein>
    <recommendedName>
        <fullName evidence="1">Molybdenum cofactor guanylyltransferase</fullName>
        <shortName evidence="1">MoCo guanylyltransferase</shortName>
        <ecNumber evidence="1">2.7.7.77</ecNumber>
    </recommendedName>
    <alternativeName>
        <fullName evidence="1">GTP:molybdopterin guanylyltransferase</fullName>
    </alternativeName>
    <alternativeName>
        <fullName evidence="1">Mo-MPT guanylyltransferase</fullName>
    </alternativeName>
    <alternativeName>
        <fullName evidence="1">Molybdopterin guanylyltransferase</fullName>
    </alternativeName>
    <alternativeName>
        <fullName evidence="1">Molybdopterin-guanine dinucleotide synthase</fullName>
        <shortName evidence="1">MGD synthase</shortName>
    </alternativeName>
</protein>
<dbReference type="EC" id="2.7.7.77" evidence="1"/>
<dbReference type="EMBL" id="AL111168">
    <property type="protein sequence ID" value="CAL35462.1"/>
    <property type="molecule type" value="Genomic_DNA"/>
</dbReference>
<dbReference type="PIR" id="C81279">
    <property type="entry name" value="C81279"/>
</dbReference>
<dbReference type="RefSeq" id="WP_002867312.1">
    <property type="nucleotide sequence ID" value="NZ_SZUC01000003.1"/>
</dbReference>
<dbReference type="RefSeq" id="YP_002344738.1">
    <property type="nucleotide sequence ID" value="NC_002163.1"/>
</dbReference>
<dbReference type="SMR" id="Q9PMU9"/>
<dbReference type="IntAct" id="Q9PMU9">
    <property type="interactions" value="2"/>
</dbReference>
<dbReference type="STRING" id="192222.Cj1350"/>
<dbReference type="PaxDb" id="192222-Cj1350"/>
<dbReference type="EnsemblBacteria" id="CAL35462">
    <property type="protein sequence ID" value="CAL35462"/>
    <property type="gene ID" value="Cj1350"/>
</dbReference>
<dbReference type="GeneID" id="905642"/>
<dbReference type="KEGG" id="cje:Cj1350"/>
<dbReference type="PATRIC" id="fig|192222.6.peg.1332"/>
<dbReference type="eggNOG" id="COG0746">
    <property type="taxonomic scope" value="Bacteria"/>
</dbReference>
<dbReference type="HOGENOM" id="CLU_055597_2_2_7"/>
<dbReference type="OrthoDB" id="9788394at2"/>
<dbReference type="Proteomes" id="UP000000799">
    <property type="component" value="Chromosome"/>
</dbReference>
<dbReference type="GO" id="GO:0005737">
    <property type="term" value="C:cytoplasm"/>
    <property type="evidence" value="ECO:0007669"/>
    <property type="project" value="UniProtKB-SubCell"/>
</dbReference>
<dbReference type="GO" id="GO:0005525">
    <property type="term" value="F:GTP binding"/>
    <property type="evidence" value="ECO:0007669"/>
    <property type="project" value="UniProtKB-UniRule"/>
</dbReference>
<dbReference type="GO" id="GO:0046872">
    <property type="term" value="F:metal ion binding"/>
    <property type="evidence" value="ECO:0007669"/>
    <property type="project" value="UniProtKB-KW"/>
</dbReference>
<dbReference type="GO" id="GO:0061603">
    <property type="term" value="F:molybdenum cofactor guanylyltransferase activity"/>
    <property type="evidence" value="ECO:0007669"/>
    <property type="project" value="UniProtKB-EC"/>
</dbReference>
<dbReference type="GO" id="GO:1902758">
    <property type="term" value="P:bis(molybdopterin guanine dinucleotide)molybdenum biosynthetic process"/>
    <property type="evidence" value="ECO:0007669"/>
    <property type="project" value="TreeGrafter"/>
</dbReference>
<dbReference type="CDD" id="cd02503">
    <property type="entry name" value="MobA"/>
    <property type="match status" value="1"/>
</dbReference>
<dbReference type="FunFam" id="3.90.550.10:FF:000199">
    <property type="entry name" value="Molybdenum cofactor guanylyltransferase"/>
    <property type="match status" value="1"/>
</dbReference>
<dbReference type="Gene3D" id="3.90.550.10">
    <property type="entry name" value="Spore Coat Polysaccharide Biosynthesis Protein SpsA, Chain A"/>
    <property type="match status" value="1"/>
</dbReference>
<dbReference type="HAMAP" id="MF_00316">
    <property type="entry name" value="MobA"/>
    <property type="match status" value="1"/>
</dbReference>
<dbReference type="InterPro" id="IPR025877">
    <property type="entry name" value="MobA-like_NTP_Trfase"/>
</dbReference>
<dbReference type="InterPro" id="IPR013482">
    <property type="entry name" value="Molybde_CF_guanTrfase"/>
</dbReference>
<dbReference type="InterPro" id="IPR029044">
    <property type="entry name" value="Nucleotide-diphossugar_trans"/>
</dbReference>
<dbReference type="PANTHER" id="PTHR19136">
    <property type="entry name" value="MOLYBDENUM COFACTOR GUANYLYLTRANSFERASE"/>
    <property type="match status" value="1"/>
</dbReference>
<dbReference type="PANTHER" id="PTHR19136:SF81">
    <property type="entry name" value="MOLYBDENUM COFACTOR GUANYLYLTRANSFERASE"/>
    <property type="match status" value="1"/>
</dbReference>
<dbReference type="Pfam" id="PF12804">
    <property type="entry name" value="NTP_transf_3"/>
    <property type="match status" value="1"/>
</dbReference>
<dbReference type="SUPFAM" id="SSF53448">
    <property type="entry name" value="Nucleotide-diphospho-sugar transferases"/>
    <property type="match status" value="1"/>
</dbReference>
<proteinExistence type="inferred from homology"/>
<evidence type="ECO:0000255" key="1">
    <source>
        <dbReference type="HAMAP-Rule" id="MF_00316"/>
    </source>
</evidence>